<comment type="function">
    <text evidence="1">Endonuclease that specifically degrades the RNA of RNA-DNA hybrids.</text>
</comment>
<comment type="catalytic activity">
    <reaction evidence="1">
        <text>Endonucleolytic cleavage to 5'-phosphomonoester.</text>
        <dbReference type="EC" id="3.1.26.4"/>
    </reaction>
</comment>
<comment type="cofactor">
    <cofactor evidence="1">
        <name>Mn(2+)</name>
        <dbReference type="ChEBI" id="CHEBI:29035"/>
    </cofactor>
    <cofactor evidence="1">
        <name>Mg(2+)</name>
        <dbReference type="ChEBI" id="CHEBI:18420"/>
    </cofactor>
    <text evidence="1">Manganese or magnesium. Binds 1 divalent metal ion per monomer in the absence of substrate. May bind a second metal ion after substrate binding.</text>
</comment>
<comment type="subcellular location">
    <subcellularLocation>
        <location evidence="1">Cytoplasm</location>
    </subcellularLocation>
</comment>
<comment type="similarity">
    <text evidence="1">Belongs to the RNase HII family. RnhC subfamily.</text>
</comment>
<reference key="1">
    <citation type="journal article" date="2010" name="Genome Biol.">
        <title>Structure and dynamics of the pan-genome of Streptococcus pneumoniae and closely related species.</title>
        <authorList>
            <person name="Donati C."/>
            <person name="Hiller N.L."/>
            <person name="Tettelin H."/>
            <person name="Muzzi A."/>
            <person name="Croucher N.J."/>
            <person name="Angiuoli S.V."/>
            <person name="Oggioni M."/>
            <person name="Dunning Hotopp J.C."/>
            <person name="Hu F.Z."/>
            <person name="Riley D.R."/>
            <person name="Covacci A."/>
            <person name="Mitchell T.J."/>
            <person name="Bentley S.D."/>
            <person name="Kilian M."/>
            <person name="Ehrlich G.D."/>
            <person name="Rappuoli R."/>
            <person name="Moxon E.R."/>
            <person name="Masignani V."/>
        </authorList>
    </citation>
    <scope>NUCLEOTIDE SEQUENCE [LARGE SCALE GENOMIC DNA]</scope>
    <source>
        <strain>70585</strain>
    </source>
</reference>
<protein>
    <recommendedName>
        <fullName evidence="1">Ribonuclease HIII</fullName>
        <shortName evidence="1">RNase HIII</shortName>
        <ecNumber evidence="1">3.1.26.4</ecNumber>
    </recommendedName>
</protein>
<evidence type="ECO:0000255" key="1">
    <source>
        <dbReference type="HAMAP-Rule" id="MF_00053"/>
    </source>
</evidence>
<evidence type="ECO:0000255" key="2">
    <source>
        <dbReference type="PROSITE-ProRule" id="PRU01319"/>
    </source>
</evidence>
<keyword id="KW-0963">Cytoplasm</keyword>
<keyword id="KW-0255">Endonuclease</keyword>
<keyword id="KW-0378">Hydrolase</keyword>
<keyword id="KW-0460">Magnesium</keyword>
<keyword id="KW-0479">Metal-binding</keyword>
<keyword id="KW-0540">Nuclease</keyword>
<feature type="chain" id="PRO_1000117703" description="Ribonuclease HIII">
    <location>
        <begin position="1"/>
        <end position="293"/>
    </location>
</feature>
<feature type="domain" description="RNase H type-2" evidence="2">
    <location>
        <begin position="78"/>
        <end position="293"/>
    </location>
</feature>
<feature type="binding site" evidence="1">
    <location>
        <position position="84"/>
    </location>
    <ligand>
        <name>a divalent metal cation</name>
        <dbReference type="ChEBI" id="CHEBI:60240"/>
    </ligand>
</feature>
<feature type="binding site" evidence="1">
    <location>
        <position position="85"/>
    </location>
    <ligand>
        <name>a divalent metal cation</name>
        <dbReference type="ChEBI" id="CHEBI:60240"/>
    </ligand>
</feature>
<feature type="binding site" evidence="1">
    <location>
        <position position="187"/>
    </location>
    <ligand>
        <name>a divalent metal cation</name>
        <dbReference type="ChEBI" id="CHEBI:60240"/>
    </ligand>
</feature>
<accession>C1C5E1</accession>
<gene>
    <name evidence="1" type="primary">rnhC</name>
    <name type="ordered locus">SP70585_0475</name>
</gene>
<organism>
    <name type="scientific">Streptococcus pneumoniae (strain 70585)</name>
    <dbReference type="NCBI Taxonomy" id="488221"/>
    <lineage>
        <taxon>Bacteria</taxon>
        <taxon>Bacillati</taxon>
        <taxon>Bacillota</taxon>
        <taxon>Bacilli</taxon>
        <taxon>Lactobacillales</taxon>
        <taxon>Streptococcaceae</taxon>
        <taxon>Streptococcus</taxon>
    </lineage>
</organism>
<name>RNH3_STRP7</name>
<proteinExistence type="inferred from homology"/>
<dbReference type="EC" id="3.1.26.4" evidence="1"/>
<dbReference type="EMBL" id="CP000918">
    <property type="protein sequence ID" value="ACO16696.1"/>
    <property type="molecule type" value="Genomic_DNA"/>
</dbReference>
<dbReference type="RefSeq" id="WP_000146875.1">
    <property type="nucleotide sequence ID" value="NC_012468.1"/>
</dbReference>
<dbReference type="SMR" id="C1C5E1"/>
<dbReference type="KEGG" id="snm:SP70585_0475"/>
<dbReference type="HOGENOM" id="CLU_059546_1_0_9"/>
<dbReference type="Proteomes" id="UP000002211">
    <property type="component" value="Chromosome"/>
</dbReference>
<dbReference type="GO" id="GO:0005737">
    <property type="term" value="C:cytoplasm"/>
    <property type="evidence" value="ECO:0007669"/>
    <property type="project" value="UniProtKB-SubCell"/>
</dbReference>
<dbReference type="GO" id="GO:0032299">
    <property type="term" value="C:ribonuclease H2 complex"/>
    <property type="evidence" value="ECO:0007669"/>
    <property type="project" value="TreeGrafter"/>
</dbReference>
<dbReference type="GO" id="GO:0000287">
    <property type="term" value="F:magnesium ion binding"/>
    <property type="evidence" value="ECO:0007669"/>
    <property type="project" value="UniProtKB-UniRule"/>
</dbReference>
<dbReference type="GO" id="GO:0003723">
    <property type="term" value="F:RNA binding"/>
    <property type="evidence" value="ECO:0007669"/>
    <property type="project" value="InterPro"/>
</dbReference>
<dbReference type="GO" id="GO:0004523">
    <property type="term" value="F:RNA-DNA hybrid ribonuclease activity"/>
    <property type="evidence" value="ECO:0007669"/>
    <property type="project" value="UniProtKB-UniRule"/>
</dbReference>
<dbReference type="GO" id="GO:0043137">
    <property type="term" value="P:DNA replication, removal of RNA primer"/>
    <property type="evidence" value="ECO:0007669"/>
    <property type="project" value="TreeGrafter"/>
</dbReference>
<dbReference type="GO" id="GO:0006298">
    <property type="term" value="P:mismatch repair"/>
    <property type="evidence" value="ECO:0007669"/>
    <property type="project" value="TreeGrafter"/>
</dbReference>
<dbReference type="CDD" id="cd06590">
    <property type="entry name" value="RNase_HII_bacteria_HIII_like"/>
    <property type="match status" value="1"/>
</dbReference>
<dbReference type="CDD" id="cd14796">
    <property type="entry name" value="RNAse_HIII_N"/>
    <property type="match status" value="1"/>
</dbReference>
<dbReference type="FunFam" id="3.30.420.10:FF:000047">
    <property type="entry name" value="Ribonuclease HIII"/>
    <property type="match status" value="1"/>
</dbReference>
<dbReference type="Gene3D" id="3.30.420.10">
    <property type="entry name" value="Ribonuclease H-like superfamily/Ribonuclease H"/>
    <property type="match status" value="1"/>
</dbReference>
<dbReference type="Gene3D" id="3.30.310.10">
    <property type="entry name" value="TATA-Binding Protein"/>
    <property type="match status" value="1"/>
</dbReference>
<dbReference type="HAMAP" id="MF_00053">
    <property type="entry name" value="RNase_HIII"/>
    <property type="match status" value="1"/>
</dbReference>
<dbReference type="InterPro" id="IPR001352">
    <property type="entry name" value="RNase_HII/HIII"/>
</dbReference>
<dbReference type="InterPro" id="IPR024567">
    <property type="entry name" value="RNase_HII/HIII_dom"/>
</dbReference>
<dbReference type="InterPro" id="IPR004641">
    <property type="entry name" value="RNase_HIII"/>
</dbReference>
<dbReference type="InterPro" id="IPR024568">
    <property type="entry name" value="RNase_HIII_N"/>
</dbReference>
<dbReference type="InterPro" id="IPR012337">
    <property type="entry name" value="RNaseH-like_sf"/>
</dbReference>
<dbReference type="InterPro" id="IPR036397">
    <property type="entry name" value="RNaseH_sf"/>
</dbReference>
<dbReference type="InterPro" id="IPR012295">
    <property type="entry name" value="TBP_dom_sf"/>
</dbReference>
<dbReference type="NCBIfam" id="TIGR00716">
    <property type="entry name" value="rnhC"/>
    <property type="match status" value="1"/>
</dbReference>
<dbReference type="PANTHER" id="PTHR10954:SF23">
    <property type="entry name" value="RIBONUCLEASE"/>
    <property type="match status" value="1"/>
</dbReference>
<dbReference type="PANTHER" id="PTHR10954">
    <property type="entry name" value="RIBONUCLEASE H2 SUBUNIT A"/>
    <property type="match status" value="1"/>
</dbReference>
<dbReference type="Pfam" id="PF11858">
    <property type="entry name" value="DUF3378"/>
    <property type="match status" value="1"/>
</dbReference>
<dbReference type="Pfam" id="PF01351">
    <property type="entry name" value="RNase_HII"/>
    <property type="match status" value="1"/>
</dbReference>
<dbReference type="PIRSF" id="PIRSF037748">
    <property type="entry name" value="RnhC"/>
    <property type="match status" value="1"/>
</dbReference>
<dbReference type="SUPFAM" id="SSF53098">
    <property type="entry name" value="Ribonuclease H-like"/>
    <property type="match status" value="1"/>
</dbReference>
<dbReference type="PROSITE" id="PS51975">
    <property type="entry name" value="RNASE_H_2"/>
    <property type="match status" value="1"/>
</dbReference>
<sequence length="293" mass="32377">MASITLTPSEKDIQAFLEHYQTSLAPSKNPYIRYFLKLPQATVSIYTSGKILLQGEGAEKYASFFGYQAVEQTSGQNLPLIGTDEVGNGSYFGGLAVVATFVTPDQHDFLRKLGVGDSKTLTDQKIRQITPILKEKIQHQALLLSPSKYNEVIGDRYNAVSVKVALHNQAIYLLLQKGVQPEKIVIDAFTSAKNYDKYLAQEANRFSNPISLEEKAEGKYLSVAVSSVIARDLFLENLENLGRELGYQLPSGAGTASDKVASQILQAYGMQGLSFCAKLHFKNTEKAKKRLER</sequence>